<keyword id="KW-1003">Cell membrane</keyword>
<keyword id="KW-0472">Membrane</keyword>
<keyword id="KW-1185">Reference proteome</keyword>
<keyword id="KW-0812">Transmembrane</keyword>
<keyword id="KW-1133">Transmembrane helix</keyword>
<gene>
    <name type="ORF">ARALYDRAFT_321547</name>
</gene>
<evidence type="ECO:0000250" key="1"/>
<evidence type="ECO:0000255" key="2"/>
<evidence type="ECO:0000256" key="3">
    <source>
        <dbReference type="SAM" id="MobiDB-lite"/>
    </source>
</evidence>
<evidence type="ECO:0000305" key="4"/>
<dbReference type="EMBL" id="GL348716">
    <property type="protein sequence ID" value="EFH57858.1"/>
    <property type="molecule type" value="Genomic_DNA"/>
</dbReference>
<dbReference type="SMR" id="D7LBN4"/>
<dbReference type="STRING" id="81972.D7LBN4"/>
<dbReference type="EnsemblPlants" id="fgenesh1_pm.C_scaffold_4001604">
    <property type="protein sequence ID" value="fgenesh1_pm.C_scaffold_4001604"/>
    <property type="gene ID" value="fgenesh1_pm.C_scaffold_4001604"/>
</dbReference>
<dbReference type="Gramene" id="fgenesh1_pm.C_scaffold_4001604">
    <property type="protein sequence ID" value="fgenesh1_pm.C_scaffold_4001604"/>
    <property type="gene ID" value="fgenesh1_pm.C_scaffold_4001604"/>
</dbReference>
<dbReference type="KEGG" id="aly:9315816"/>
<dbReference type="eggNOG" id="ENOG502RYC3">
    <property type="taxonomic scope" value="Eukaryota"/>
</dbReference>
<dbReference type="HOGENOM" id="CLU_048961_4_1_1"/>
<dbReference type="OrthoDB" id="1924823at2759"/>
<dbReference type="Proteomes" id="UP000008694">
    <property type="component" value="Unassembled WGS sequence"/>
</dbReference>
<dbReference type="GO" id="GO:0005886">
    <property type="term" value="C:plasma membrane"/>
    <property type="evidence" value="ECO:0007669"/>
    <property type="project" value="UniProtKB-SubCell"/>
</dbReference>
<dbReference type="InterPro" id="IPR006702">
    <property type="entry name" value="CASP_dom"/>
</dbReference>
<dbReference type="PANTHER" id="PTHR33573">
    <property type="entry name" value="CASP-LIKE PROTEIN 4A4"/>
    <property type="match status" value="1"/>
</dbReference>
<dbReference type="PANTHER" id="PTHR33573:SF57">
    <property type="entry name" value="CASP-LIKE PROTEIN 4B1"/>
    <property type="match status" value="1"/>
</dbReference>
<dbReference type="Pfam" id="PF04535">
    <property type="entry name" value="CASP_dom"/>
    <property type="match status" value="1"/>
</dbReference>
<sequence length="188" mass="21006">MTNPDKQKPVEVTDVETAAEKTSEPTPASGTSTITQRWKREDLIKKASPITRGICLLFSLLAFLIMVSNKHGYGRNFNEYEEYRYVLAISIISTLYTAWQTFAHFSKREFFDRRTSTLVDFSGDQIVAYLLISAASSAIPLTNRFREGQDNIFTDSAASAISMAIFAFVALALSALFSGYKLSTHSFI</sequence>
<proteinExistence type="inferred from homology"/>
<protein>
    <recommendedName>
        <fullName>CASP-like protein 4B1</fullName>
        <shortName>AlCASPL4B1</shortName>
    </recommendedName>
</protein>
<reference key="1">
    <citation type="journal article" date="2011" name="Nat. Genet.">
        <title>The Arabidopsis lyrata genome sequence and the basis of rapid genome size change.</title>
        <authorList>
            <person name="Hu T.T."/>
            <person name="Pattyn P."/>
            <person name="Bakker E.G."/>
            <person name="Cao J."/>
            <person name="Cheng J.-F."/>
            <person name="Clark R.M."/>
            <person name="Fahlgren N."/>
            <person name="Fawcett J.A."/>
            <person name="Grimwood J."/>
            <person name="Gundlach H."/>
            <person name="Haberer G."/>
            <person name="Hollister J.D."/>
            <person name="Ossowski S."/>
            <person name="Ottilar R.P."/>
            <person name="Salamov A.A."/>
            <person name="Schneeberger K."/>
            <person name="Spannagl M."/>
            <person name="Wang X."/>
            <person name="Yang L."/>
            <person name="Nasrallah M.E."/>
            <person name="Bergelson J."/>
            <person name="Carrington J.C."/>
            <person name="Gaut B.S."/>
            <person name="Schmutz J."/>
            <person name="Mayer K.F.X."/>
            <person name="Van de Peer Y."/>
            <person name="Grigoriev I.V."/>
            <person name="Nordborg M."/>
            <person name="Weigel D."/>
            <person name="Guo Y.-L."/>
        </authorList>
    </citation>
    <scope>NUCLEOTIDE SEQUENCE [LARGE SCALE GENOMIC DNA]</scope>
    <source>
        <strain>cv. MN47</strain>
    </source>
</reference>
<reference key="2">
    <citation type="journal article" date="2014" name="Plant Physiol.">
        <title>Functional and evolutionary analysis of the CASPARIAN STRIP MEMBRANE DOMAIN PROTEIN family.</title>
        <authorList>
            <person name="Roppolo D."/>
            <person name="Boeckmann B."/>
            <person name="Pfister A."/>
            <person name="Boutet E."/>
            <person name="Rubio M.C."/>
            <person name="Denervaud-Tendon V."/>
            <person name="Vermeer J.E."/>
            <person name="Gheyselinck J."/>
            <person name="Xenarios I."/>
            <person name="Geldner N."/>
        </authorList>
    </citation>
    <scope>GENE FAMILY</scope>
    <scope>NOMENCLATURE</scope>
</reference>
<comment type="subunit">
    <text evidence="1">Homodimer and heterodimers.</text>
</comment>
<comment type="subcellular location">
    <subcellularLocation>
        <location evidence="1">Cell membrane</location>
        <topology evidence="1">Multi-pass membrane protein</topology>
    </subcellularLocation>
</comment>
<comment type="similarity">
    <text evidence="4">Belongs to the Casparian strip membrane proteins (CASP) family.</text>
</comment>
<organism>
    <name type="scientific">Arabidopsis lyrata subsp. lyrata</name>
    <name type="common">Lyre-leaved rock-cress</name>
    <dbReference type="NCBI Taxonomy" id="81972"/>
    <lineage>
        <taxon>Eukaryota</taxon>
        <taxon>Viridiplantae</taxon>
        <taxon>Streptophyta</taxon>
        <taxon>Embryophyta</taxon>
        <taxon>Tracheophyta</taxon>
        <taxon>Spermatophyta</taxon>
        <taxon>Magnoliopsida</taxon>
        <taxon>eudicotyledons</taxon>
        <taxon>Gunneridae</taxon>
        <taxon>Pentapetalae</taxon>
        <taxon>rosids</taxon>
        <taxon>malvids</taxon>
        <taxon>Brassicales</taxon>
        <taxon>Brassicaceae</taxon>
        <taxon>Camelineae</taxon>
        <taxon>Arabidopsis</taxon>
    </lineage>
</organism>
<accession>D7LBN4</accession>
<feature type="chain" id="PRO_0000417757" description="CASP-like protein 4B1">
    <location>
        <begin position="1"/>
        <end position="188"/>
    </location>
</feature>
<feature type="topological domain" description="Cytoplasmic" evidence="2">
    <location>
        <begin position="1"/>
        <end position="46"/>
    </location>
</feature>
<feature type="transmembrane region" description="Helical" evidence="2">
    <location>
        <begin position="47"/>
        <end position="67"/>
    </location>
</feature>
<feature type="topological domain" description="Extracellular" evidence="2">
    <location>
        <begin position="68"/>
        <end position="84"/>
    </location>
</feature>
<feature type="transmembrane region" description="Helical" evidence="2">
    <location>
        <begin position="85"/>
        <end position="105"/>
    </location>
</feature>
<feature type="topological domain" description="Cytoplasmic" evidence="2">
    <location>
        <begin position="106"/>
        <end position="120"/>
    </location>
</feature>
<feature type="transmembrane region" description="Helical" evidence="2">
    <location>
        <begin position="121"/>
        <end position="141"/>
    </location>
</feature>
<feature type="topological domain" description="Extracellular" evidence="2">
    <location>
        <begin position="142"/>
        <end position="156"/>
    </location>
</feature>
<feature type="transmembrane region" description="Helical" evidence="2">
    <location>
        <begin position="157"/>
        <end position="177"/>
    </location>
</feature>
<feature type="topological domain" description="Cytoplasmic" evidence="2">
    <location>
        <begin position="178"/>
        <end position="188"/>
    </location>
</feature>
<feature type="region of interest" description="Disordered" evidence="3">
    <location>
        <begin position="1"/>
        <end position="34"/>
    </location>
</feature>
<feature type="compositionally biased region" description="Basic and acidic residues" evidence="3">
    <location>
        <begin position="1"/>
        <end position="11"/>
    </location>
</feature>
<feature type="compositionally biased region" description="Polar residues" evidence="3">
    <location>
        <begin position="24"/>
        <end position="34"/>
    </location>
</feature>
<name>CSPLH_ARALL</name>